<protein>
    <recommendedName>
        <fullName>Uncharacterized mitochondrial protein ymf34</fullName>
    </recommendedName>
    <alternativeName>
        <fullName>ORF74</fullName>
    </alternativeName>
</protein>
<sequence length="74" mass="8495">MLDQFIKHRLKLKENNKLGALTFQIVLNGIFGRTNSIYFALYEPSLHGSVCGQLIMLEVFTEMVSDDLLWCNTD</sequence>
<feature type="chain" id="PRO_0000196861" description="Uncharacterized mitochondrial protein ymf34">
    <location>
        <begin position="1"/>
        <end position="74"/>
    </location>
</feature>
<organism>
    <name type="scientific">Marchantia polymorpha</name>
    <name type="common">Common liverwort</name>
    <name type="synonym">Marchantia aquatica</name>
    <dbReference type="NCBI Taxonomy" id="3197"/>
    <lineage>
        <taxon>Eukaryota</taxon>
        <taxon>Viridiplantae</taxon>
        <taxon>Streptophyta</taxon>
        <taxon>Embryophyta</taxon>
        <taxon>Marchantiophyta</taxon>
        <taxon>Marchantiopsida</taxon>
        <taxon>Marchantiidae</taxon>
        <taxon>Marchantiales</taxon>
        <taxon>Marchantiaceae</taxon>
        <taxon>Marchantia</taxon>
    </lineage>
</organism>
<keyword id="KW-0496">Mitochondrion</keyword>
<reference key="1">
    <citation type="journal article" date="1992" name="J. Mol. Biol.">
        <title>Gene organization deduced from the complete sequence of liverwort Marchantia polymorpha mitochondrial DNA. A primitive form of plant mitochondrial genome.</title>
        <authorList>
            <person name="Oda K."/>
            <person name="Yamato K."/>
            <person name="Ohta E."/>
            <person name="Nakamura Y."/>
            <person name="Takemura M."/>
            <person name="Nozato N."/>
            <person name="Akashi K."/>
            <person name="Kanegae T."/>
            <person name="Ogura Y."/>
            <person name="Kohchi T."/>
            <person name="Ohyama K."/>
        </authorList>
    </citation>
    <scope>NUCLEOTIDE SEQUENCE [GENOMIC DNA]</scope>
</reference>
<dbReference type="EMBL" id="M68929">
    <property type="protein sequence ID" value="AAC09450.1"/>
    <property type="molecule type" value="Genomic_DNA"/>
</dbReference>
<dbReference type="PIR" id="S26001">
    <property type="entry name" value="S26001"/>
</dbReference>
<dbReference type="SMR" id="P38476"/>
<dbReference type="GO" id="GO:0005739">
    <property type="term" value="C:mitochondrion"/>
    <property type="evidence" value="ECO:0007669"/>
    <property type="project" value="UniProtKB-SubCell"/>
</dbReference>
<name>YMF34_MARPO</name>
<gene>
    <name type="primary">YMF34</name>
</gene>
<accession>P38476</accession>
<evidence type="ECO:0000305" key="1"/>
<proteinExistence type="predicted"/>
<comment type="subcellular location">
    <subcellularLocation>
        <location evidence="1">Mitochondrion</location>
    </subcellularLocation>
</comment>
<geneLocation type="mitochondrion"/>